<accession>P56983</accession>
<accession>Q8JZZ3</accession>
<sequence length="99" mass="10594">MDLIGFGYAALVTIGSVLGYKRRGGVPSLIAGLSVGLLAGYGAYRVSNDRRDVKVSLFTAFFLATIMGVRFKRSKKVMPAGLVAGLSLMMILRLVLLLL</sequence>
<organism>
    <name type="scientific">Mus musculus</name>
    <name type="common">Mouse</name>
    <dbReference type="NCBI Taxonomy" id="10090"/>
    <lineage>
        <taxon>Eukaryota</taxon>
        <taxon>Metazoa</taxon>
        <taxon>Chordata</taxon>
        <taxon>Craniata</taxon>
        <taxon>Vertebrata</taxon>
        <taxon>Euteleostomi</taxon>
        <taxon>Mammalia</taxon>
        <taxon>Eutheria</taxon>
        <taxon>Euarchontoglires</taxon>
        <taxon>Glires</taxon>
        <taxon>Rodentia</taxon>
        <taxon>Myomorpha</taxon>
        <taxon>Muroidea</taxon>
        <taxon>Muridae</taxon>
        <taxon>Murinae</taxon>
        <taxon>Mus</taxon>
        <taxon>Mus</taxon>
    </lineage>
</organism>
<name>TM14A_MOUSE</name>
<proteinExistence type="inferred from homology"/>
<protein>
    <recommendedName>
        <fullName>Transmembrane protein 14A</fullName>
    </recommendedName>
</protein>
<comment type="function">
    <text evidence="1">Inhibits apoptosis via negative regulation of the mitochondrial outer membrane permeabilization involved in apoptotic signaling pathway.</text>
</comment>
<comment type="subcellular location">
    <subcellularLocation>
        <location evidence="1">Mitochondrion membrane</location>
        <topology evidence="2">Multi-pass membrane protein</topology>
    </subcellularLocation>
    <subcellularLocation>
        <location evidence="1">Endoplasmic reticulum membrane</location>
    </subcellularLocation>
</comment>
<comment type="similarity">
    <text evidence="3">Belongs to the TMEM14 family.</text>
</comment>
<evidence type="ECO:0000250" key="1">
    <source>
        <dbReference type="UniProtKB" id="Q9Y6G1"/>
    </source>
</evidence>
<evidence type="ECO:0000255" key="2"/>
<evidence type="ECO:0000305" key="3"/>
<keyword id="KW-0256">Endoplasmic reticulum</keyword>
<keyword id="KW-0472">Membrane</keyword>
<keyword id="KW-0496">Mitochondrion</keyword>
<keyword id="KW-1185">Reference proteome</keyword>
<keyword id="KW-0812">Transmembrane</keyword>
<keyword id="KW-1133">Transmembrane helix</keyword>
<feature type="chain" id="PRO_0000221170" description="Transmembrane protein 14A">
    <location>
        <begin position="1"/>
        <end position="99"/>
    </location>
</feature>
<feature type="transmembrane region" description="Helical" evidence="2">
    <location>
        <begin position="1"/>
        <end position="21"/>
    </location>
</feature>
<feature type="transmembrane region" description="Helical" evidence="2">
    <location>
        <begin position="24"/>
        <end position="44"/>
    </location>
</feature>
<feature type="transmembrane region" description="Helical" evidence="2">
    <location>
        <begin position="79"/>
        <end position="99"/>
    </location>
</feature>
<dbReference type="EMBL" id="BC034768">
    <property type="protein sequence ID" value="AAH34768.1"/>
    <property type="molecule type" value="mRNA"/>
</dbReference>
<dbReference type="EMBL" id="BC060034">
    <property type="protein sequence ID" value="AAH60034.1"/>
    <property type="molecule type" value="mRNA"/>
</dbReference>
<dbReference type="CCDS" id="CCDS35523.1"/>
<dbReference type="RefSeq" id="NP_001277608.1">
    <property type="nucleotide sequence ID" value="NM_001290679.1"/>
</dbReference>
<dbReference type="RefSeq" id="NP_083674.2">
    <property type="nucleotide sequence ID" value="NM_029398.3"/>
</dbReference>
<dbReference type="SMR" id="P56983"/>
<dbReference type="FunCoup" id="P56983">
    <property type="interactions" value="579"/>
</dbReference>
<dbReference type="STRING" id="10090.ENSMUSP00000027064"/>
<dbReference type="PhosphoSitePlus" id="P56983"/>
<dbReference type="PaxDb" id="10090-ENSMUSP00000027065"/>
<dbReference type="ProteomicsDB" id="258903"/>
<dbReference type="Antibodypedia" id="30922">
    <property type="antibodies" value="34 antibodies from 11 providers"/>
</dbReference>
<dbReference type="Ensembl" id="ENSMUST00000027065.12">
    <property type="protein sequence ID" value="ENSMUSP00000027065.6"/>
    <property type="gene ID" value="ENSMUSG00000025933.16"/>
</dbReference>
<dbReference type="GeneID" id="75712"/>
<dbReference type="KEGG" id="mmu:75712"/>
<dbReference type="UCSC" id="uc007alj.2">
    <property type="organism name" value="mouse"/>
</dbReference>
<dbReference type="AGR" id="MGI:1922962"/>
<dbReference type="CTD" id="28978"/>
<dbReference type="MGI" id="MGI:1922962">
    <property type="gene designation" value="Tmem14a"/>
</dbReference>
<dbReference type="VEuPathDB" id="HostDB:ENSMUSG00000025933"/>
<dbReference type="eggNOG" id="KOG4267">
    <property type="taxonomic scope" value="Eukaryota"/>
</dbReference>
<dbReference type="GeneTree" id="ENSGT00940000158206"/>
<dbReference type="HOGENOM" id="CLU_096652_4_3_1"/>
<dbReference type="InParanoid" id="P56983"/>
<dbReference type="OMA" id="MGTRYKK"/>
<dbReference type="OrthoDB" id="5620at2759"/>
<dbReference type="PhylomeDB" id="P56983"/>
<dbReference type="TreeFam" id="TF323345"/>
<dbReference type="BioGRID-ORCS" id="75712">
    <property type="hits" value="5 hits in 78 CRISPR screens"/>
</dbReference>
<dbReference type="PRO" id="PR:P56983"/>
<dbReference type="Proteomes" id="UP000000589">
    <property type="component" value="Chromosome 1"/>
</dbReference>
<dbReference type="RNAct" id="P56983">
    <property type="molecule type" value="protein"/>
</dbReference>
<dbReference type="Bgee" id="ENSMUSG00000025933">
    <property type="expression patterns" value="Expressed in prefrontal cortex and 219 other cell types or tissues"/>
</dbReference>
<dbReference type="ExpressionAtlas" id="P56983">
    <property type="expression patterns" value="baseline and differential"/>
</dbReference>
<dbReference type="GO" id="GO:0005789">
    <property type="term" value="C:endoplasmic reticulum membrane"/>
    <property type="evidence" value="ECO:0000250"/>
    <property type="project" value="UniProtKB"/>
</dbReference>
<dbReference type="GO" id="GO:0031966">
    <property type="term" value="C:mitochondrial membrane"/>
    <property type="evidence" value="ECO:0000250"/>
    <property type="project" value="UniProtKB"/>
</dbReference>
<dbReference type="GO" id="GO:0043066">
    <property type="term" value="P:negative regulation of apoptotic process"/>
    <property type="evidence" value="ECO:0000250"/>
    <property type="project" value="UniProtKB"/>
</dbReference>
<dbReference type="GO" id="GO:1901029">
    <property type="term" value="P:negative regulation of mitochondrial outer membrane permeabilization involved in apoptotic signaling pathway"/>
    <property type="evidence" value="ECO:0000250"/>
    <property type="project" value="UniProtKB"/>
</dbReference>
<dbReference type="FunFam" id="1.10.10.1740:FF:000001">
    <property type="entry name" value="Transmembrane protein 14A"/>
    <property type="match status" value="1"/>
</dbReference>
<dbReference type="Gene3D" id="6.10.250.1330">
    <property type="match status" value="1"/>
</dbReference>
<dbReference type="Gene3D" id="1.10.10.1740">
    <property type="entry name" value="Transmembrane protein 14-like"/>
    <property type="match status" value="1"/>
</dbReference>
<dbReference type="InterPro" id="IPR005349">
    <property type="entry name" value="TMEM14"/>
</dbReference>
<dbReference type="InterPro" id="IPR044890">
    <property type="entry name" value="TMEM14_sf"/>
</dbReference>
<dbReference type="PANTHER" id="PTHR12668">
    <property type="entry name" value="TRANSMEMBRANE PROTEIN 14, 15"/>
    <property type="match status" value="1"/>
</dbReference>
<dbReference type="PANTHER" id="PTHR12668:SF11">
    <property type="entry name" value="TRANSMEMBRANE PROTEIN 14A"/>
    <property type="match status" value="1"/>
</dbReference>
<dbReference type="Pfam" id="PF03647">
    <property type="entry name" value="Tmemb_14"/>
    <property type="match status" value="1"/>
</dbReference>
<gene>
    <name type="primary">Tmem14a</name>
</gene>
<reference key="1">
    <citation type="journal article" date="2004" name="Genome Res.">
        <title>The status, quality, and expansion of the NIH full-length cDNA project: the Mammalian Gene Collection (MGC).</title>
        <authorList>
            <consortium name="The MGC Project Team"/>
        </authorList>
    </citation>
    <scope>NUCLEOTIDE SEQUENCE [LARGE SCALE MRNA]</scope>
    <source>
        <tissue>Eye</tissue>
        <tissue>Mammary tumor</tissue>
    </source>
</reference>